<comment type="function">
    <text evidence="1">Binds to the 23S rRNA.</text>
</comment>
<comment type="subunit">
    <text evidence="1">Part of the 50S ribosomal subunit.</text>
</comment>
<comment type="similarity">
    <text evidence="1">Belongs to the universal ribosomal protein uL15 family.</text>
</comment>
<proteinExistence type="inferred from homology"/>
<sequence>MKLNNLSPAPGSKHAEKRVGRGIGSGLGKTGGRGHKGQKSRSGGSVKPGFEGGQMPLQRRLPKYGFTSAKSLVSEEVRLAELAKVDGEIVDLESLKKANVLKDNTQYAKVILSGELNKAVTVRGLKVTKGARDAIAAAGGKVED</sequence>
<gene>
    <name evidence="1" type="primary">rplO</name>
    <name type="ordered locus">Csal_0440</name>
</gene>
<protein>
    <recommendedName>
        <fullName evidence="1">Large ribosomal subunit protein uL15</fullName>
    </recommendedName>
    <alternativeName>
        <fullName evidence="3">50S ribosomal protein L15</fullName>
    </alternativeName>
</protein>
<reference key="1">
    <citation type="journal article" date="2011" name="Stand. Genomic Sci.">
        <title>Complete genome sequence of the halophilic and highly halotolerant Chromohalobacter salexigens type strain (1H11(T)).</title>
        <authorList>
            <person name="Copeland A."/>
            <person name="O'Connor K."/>
            <person name="Lucas S."/>
            <person name="Lapidus A."/>
            <person name="Berry K.W."/>
            <person name="Detter J.C."/>
            <person name="Del Rio T.G."/>
            <person name="Hammon N."/>
            <person name="Dalin E."/>
            <person name="Tice H."/>
            <person name="Pitluck S."/>
            <person name="Bruce D."/>
            <person name="Goodwin L."/>
            <person name="Han C."/>
            <person name="Tapia R."/>
            <person name="Saunders E."/>
            <person name="Schmutz J."/>
            <person name="Brettin T."/>
            <person name="Larimer F."/>
            <person name="Land M."/>
            <person name="Hauser L."/>
            <person name="Vargas C."/>
            <person name="Nieto J.J."/>
            <person name="Kyrpides N.C."/>
            <person name="Ivanova N."/>
            <person name="Goker M."/>
            <person name="Klenk H.P."/>
            <person name="Csonka L.N."/>
            <person name="Woyke T."/>
        </authorList>
    </citation>
    <scope>NUCLEOTIDE SEQUENCE [LARGE SCALE GENOMIC DNA]</scope>
    <source>
        <strain>ATCC BAA-138 / DSM 3043 / CIP 106854 / NCIMB 13768 / 1H11</strain>
    </source>
</reference>
<accession>Q1R0F6</accession>
<dbReference type="EMBL" id="CP000285">
    <property type="protein sequence ID" value="ABE57802.1"/>
    <property type="molecule type" value="Genomic_DNA"/>
</dbReference>
<dbReference type="RefSeq" id="WP_011505748.1">
    <property type="nucleotide sequence ID" value="NC_007963.1"/>
</dbReference>
<dbReference type="SMR" id="Q1R0F6"/>
<dbReference type="STRING" id="290398.Csal_0440"/>
<dbReference type="GeneID" id="95333193"/>
<dbReference type="KEGG" id="csa:Csal_0440"/>
<dbReference type="eggNOG" id="COG0200">
    <property type="taxonomic scope" value="Bacteria"/>
</dbReference>
<dbReference type="HOGENOM" id="CLU_055188_4_2_6"/>
<dbReference type="OrthoDB" id="9810293at2"/>
<dbReference type="Proteomes" id="UP000000239">
    <property type="component" value="Chromosome"/>
</dbReference>
<dbReference type="GO" id="GO:0022625">
    <property type="term" value="C:cytosolic large ribosomal subunit"/>
    <property type="evidence" value="ECO:0007669"/>
    <property type="project" value="TreeGrafter"/>
</dbReference>
<dbReference type="GO" id="GO:0019843">
    <property type="term" value="F:rRNA binding"/>
    <property type="evidence" value="ECO:0007669"/>
    <property type="project" value="UniProtKB-UniRule"/>
</dbReference>
<dbReference type="GO" id="GO:0003735">
    <property type="term" value="F:structural constituent of ribosome"/>
    <property type="evidence" value="ECO:0007669"/>
    <property type="project" value="InterPro"/>
</dbReference>
<dbReference type="GO" id="GO:0006412">
    <property type="term" value="P:translation"/>
    <property type="evidence" value="ECO:0007669"/>
    <property type="project" value="UniProtKB-UniRule"/>
</dbReference>
<dbReference type="Gene3D" id="3.100.10.10">
    <property type="match status" value="1"/>
</dbReference>
<dbReference type="HAMAP" id="MF_01341">
    <property type="entry name" value="Ribosomal_uL15"/>
    <property type="match status" value="1"/>
</dbReference>
<dbReference type="InterPro" id="IPR030878">
    <property type="entry name" value="Ribosomal_uL15"/>
</dbReference>
<dbReference type="InterPro" id="IPR021131">
    <property type="entry name" value="Ribosomal_uL15/eL18"/>
</dbReference>
<dbReference type="InterPro" id="IPR036227">
    <property type="entry name" value="Ribosomal_uL15/eL18_sf"/>
</dbReference>
<dbReference type="InterPro" id="IPR005749">
    <property type="entry name" value="Ribosomal_uL15_bac-type"/>
</dbReference>
<dbReference type="InterPro" id="IPR001196">
    <property type="entry name" value="Ribosomal_uL15_CS"/>
</dbReference>
<dbReference type="NCBIfam" id="TIGR01071">
    <property type="entry name" value="rplO_bact"/>
    <property type="match status" value="1"/>
</dbReference>
<dbReference type="PANTHER" id="PTHR12934">
    <property type="entry name" value="50S RIBOSOMAL PROTEIN L15"/>
    <property type="match status" value="1"/>
</dbReference>
<dbReference type="PANTHER" id="PTHR12934:SF11">
    <property type="entry name" value="LARGE RIBOSOMAL SUBUNIT PROTEIN UL15M"/>
    <property type="match status" value="1"/>
</dbReference>
<dbReference type="Pfam" id="PF00828">
    <property type="entry name" value="Ribosomal_L27A"/>
    <property type="match status" value="1"/>
</dbReference>
<dbReference type="SUPFAM" id="SSF52080">
    <property type="entry name" value="Ribosomal proteins L15p and L18e"/>
    <property type="match status" value="1"/>
</dbReference>
<dbReference type="PROSITE" id="PS00475">
    <property type="entry name" value="RIBOSOMAL_L15"/>
    <property type="match status" value="1"/>
</dbReference>
<name>RL15_CHRSD</name>
<evidence type="ECO:0000255" key="1">
    <source>
        <dbReference type="HAMAP-Rule" id="MF_01341"/>
    </source>
</evidence>
<evidence type="ECO:0000256" key="2">
    <source>
        <dbReference type="SAM" id="MobiDB-lite"/>
    </source>
</evidence>
<evidence type="ECO:0000305" key="3"/>
<keyword id="KW-1185">Reference proteome</keyword>
<keyword id="KW-0687">Ribonucleoprotein</keyword>
<keyword id="KW-0689">Ribosomal protein</keyword>
<keyword id="KW-0694">RNA-binding</keyword>
<keyword id="KW-0699">rRNA-binding</keyword>
<feature type="chain" id="PRO_0000251504" description="Large ribosomal subunit protein uL15">
    <location>
        <begin position="1"/>
        <end position="144"/>
    </location>
</feature>
<feature type="region of interest" description="Disordered" evidence="2">
    <location>
        <begin position="1"/>
        <end position="58"/>
    </location>
</feature>
<feature type="compositionally biased region" description="Gly residues" evidence="2">
    <location>
        <begin position="21"/>
        <end position="31"/>
    </location>
</feature>
<organism>
    <name type="scientific">Chromohalobacter salexigens (strain ATCC BAA-138 / DSM 3043 / CIP 106854 / NCIMB 13768 / 1H11)</name>
    <dbReference type="NCBI Taxonomy" id="290398"/>
    <lineage>
        <taxon>Bacteria</taxon>
        <taxon>Pseudomonadati</taxon>
        <taxon>Pseudomonadota</taxon>
        <taxon>Gammaproteobacteria</taxon>
        <taxon>Oceanospirillales</taxon>
        <taxon>Halomonadaceae</taxon>
        <taxon>Chromohalobacter</taxon>
    </lineage>
</organism>